<sequence length="417" mass="44882">MAAPGSARRPLLLLLLLLLLGLMHCASAAMFMVKNGNGTACIMANFSAAFSVNYDTKSGPKNMTFDLPSDATVVLNRSSCGKENTSDPSLVIAFGRGHTLTLNFTRNATRYSVQLMSFVYNLSDTHLFPNASSKEIKTVESITDIRADIDKKYRCVSGTQVHMNNVTVTLHDATIQAYLSNSSFSRGETRCEQDRPSPTTAPPAPPSPSPSPVPKSPSVDKYNVSGTNGTCLLASMGLQLNLTYERKDNTTVTRLLNINPNKTSASGSCGAHLVTLELHSEGTTVLLFQFGMNASSSRFFLQGIQLNTILPDARDPAFKAANGSLRALQATVGNSYKCNAEEHVRVTKAFSVNIFKVWVQAFKVEGGQFGSVEECLLDENSMLIPIAVGGALAGLVLIVLIAYLVGRKRSHAGYQTI</sequence>
<organism>
    <name type="scientific">Homo sapiens</name>
    <name type="common">Human</name>
    <dbReference type="NCBI Taxonomy" id="9606"/>
    <lineage>
        <taxon>Eukaryota</taxon>
        <taxon>Metazoa</taxon>
        <taxon>Chordata</taxon>
        <taxon>Craniata</taxon>
        <taxon>Vertebrata</taxon>
        <taxon>Euteleostomi</taxon>
        <taxon>Mammalia</taxon>
        <taxon>Eutheria</taxon>
        <taxon>Euarchontoglires</taxon>
        <taxon>Primates</taxon>
        <taxon>Haplorrhini</taxon>
        <taxon>Catarrhini</taxon>
        <taxon>Hominidae</taxon>
        <taxon>Homo</taxon>
    </lineage>
</organism>
<protein>
    <recommendedName>
        <fullName evidence="30">Lysosome-associated membrane glycoprotein 1</fullName>
        <shortName evidence="30 31">LAMP-1</shortName>
        <shortName evidence="32">Lysosome-associated membrane protein 1</shortName>
    </recommendedName>
    <alternativeName>
        <fullName evidence="29">CD107 antigen-like family member A</fullName>
    </alternativeName>
    <cdAntigenName evidence="29">CD107a</cdAntigenName>
</protein>
<dbReference type="EMBL" id="J04182">
    <property type="protein sequence ID" value="AAA60382.1"/>
    <property type="molecule type" value="mRNA"/>
</dbReference>
<dbReference type="EMBL" id="AK301584">
    <property type="protein sequence ID" value="BAG63075.1"/>
    <property type="molecule type" value="mRNA"/>
</dbReference>
<dbReference type="EMBL" id="AL136221">
    <property type="status" value="NOT_ANNOTATED_CDS"/>
    <property type="molecule type" value="Genomic_DNA"/>
</dbReference>
<dbReference type="EMBL" id="CH471085">
    <property type="protein sequence ID" value="EAX09202.1"/>
    <property type="molecule type" value="Genomic_DNA"/>
</dbReference>
<dbReference type="EMBL" id="BC006345">
    <property type="protein sequence ID" value="AAH06345.2"/>
    <property type="molecule type" value="mRNA"/>
</dbReference>
<dbReference type="EMBL" id="BC007845">
    <property type="protein sequence ID" value="AAH07845.2"/>
    <property type="molecule type" value="mRNA"/>
</dbReference>
<dbReference type="EMBL" id="BC021288">
    <property type="protein sequence ID" value="AAH21288.1"/>
    <property type="molecule type" value="mRNA"/>
</dbReference>
<dbReference type="EMBL" id="BC093044">
    <property type="protein sequence ID" value="AAH93044.1"/>
    <property type="molecule type" value="mRNA"/>
</dbReference>
<dbReference type="EMBL" id="J03263">
    <property type="protein sequence ID" value="AAA59524.1"/>
    <property type="molecule type" value="mRNA"/>
</dbReference>
<dbReference type="EMBL" id="AH003113">
    <property type="protein sequence ID" value="AAF66141.1"/>
    <property type="molecule type" value="Genomic_DNA"/>
</dbReference>
<dbReference type="CCDS" id="CCDS41909.1">
    <molecule id="P11279-1"/>
</dbReference>
<dbReference type="PIR" id="A31959">
    <property type="entry name" value="A31959"/>
</dbReference>
<dbReference type="RefSeq" id="NP_005552.3">
    <molecule id="P11279-1"/>
    <property type="nucleotide sequence ID" value="NM_005561.3"/>
</dbReference>
<dbReference type="PDB" id="8ATH">
    <property type="method" value="X-ray"/>
    <property type="resolution" value="2.37 A"/>
    <property type="chains" value="A/B=29-195"/>
</dbReference>
<dbReference type="PDB" id="8FY5">
    <property type="method" value="EM"/>
    <property type="resolution" value="3.40 A"/>
    <property type="chains" value="C/D=1-417"/>
</dbReference>
<dbReference type="PDB" id="8FYF">
    <property type="method" value="EM"/>
    <property type="resolution" value="3.40 A"/>
    <property type="chains" value="C/D=1-417"/>
</dbReference>
<dbReference type="PDB" id="9C59">
    <property type="method" value="EM"/>
    <property type="resolution" value="4.30 A"/>
    <property type="chains" value="Y/y=406-417"/>
</dbReference>
<dbReference type="PDB" id="9C5A">
    <property type="method" value="EM"/>
    <property type="resolution" value="4.20 A"/>
    <property type="chains" value="Y/y=406-417"/>
</dbReference>
<dbReference type="PDB" id="9C5B">
    <property type="method" value="EM"/>
    <property type="resolution" value="4.50 A"/>
    <property type="chains" value="Y=406-417"/>
</dbReference>
<dbReference type="PDBsum" id="8ATH"/>
<dbReference type="PDBsum" id="8FY5"/>
<dbReference type="PDBsum" id="8FYF"/>
<dbReference type="PDBsum" id="9C59"/>
<dbReference type="PDBsum" id="9C5A"/>
<dbReference type="PDBsum" id="9C5B"/>
<dbReference type="EMDB" id="EMD-29553"/>
<dbReference type="EMDB" id="EMD-29572"/>
<dbReference type="EMDB" id="EMD-3293"/>
<dbReference type="EMDB" id="EMD-45208"/>
<dbReference type="EMDB" id="EMD-45209"/>
<dbReference type="EMDB" id="EMD-45210"/>
<dbReference type="EMDB" id="EMD-45211"/>
<dbReference type="EMDB" id="EMD-45212"/>
<dbReference type="EMDB" id="EMD-45213"/>
<dbReference type="SMR" id="P11279"/>
<dbReference type="BioGRID" id="110110">
    <property type="interactions" value="657"/>
</dbReference>
<dbReference type="DIP" id="DIP-44670N"/>
<dbReference type="ELM" id="P11279"/>
<dbReference type="FunCoup" id="P11279">
    <property type="interactions" value="1237"/>
</dbReference>
<dbReference type="IntAct" id="P11279">
    <property type="interactions" value="404"/>
</dbReference>
<dbReference type="MINT" id="P11279"/>
<dbReference type="STRING" id="9606.ENSP00000333298"/>
<dbReference type="TCDB" id="9.A.16.1.1">
    <property type="family name" value="the lysosomal protein import (lpi) family"/>
</dbReference>
<dbReference type="GlyConnect" id="355">
    <property type="glycosylation" value="114 N-Linked glycans (10 sites), 3 O-Linked glycans"/>
</dbReference>
<dbReference type="GlyCosmos" id="P11279">
    <property type="glycosylation" value="26 sites, 173 glycans"/>
</dbReference>
<dbReference type="GlyGen" id="P11279">
    <property type="glycosylation" value="37 sites, 319 N-linked glycans (16 sites), 1 N-linked;o-linked glycan (1 site), 11 O-linked glycans (16 sites)"/>
</dbReference>
<dbReference type="iPTMnet" id="P11279"/>
<dbReference type="PhosphoSitePlus" id="P11279"/>
<dbReference type="SwissPalm" id="P11279"/>
<dbReference type="BioMuta" id="LAMP1"/>
<dbReference type="DMDM" id="206729915"/>
<dbReference type="jPOST" id="P11279"/>
<dbReference type="MassIVE" id="P11279"/>
<dbReference type="PaxDb" id="9606-ENSP00000333298"/>
<dbReference type="PeptideAtlas" id="P11279"/>
<dbReference type="ProteomicsDB" id="52734">
    <molecule id="P11279-1"/>
</dbReference>
<dbReference type="ProteomicsDB" id="5353"/>
<dbReference type="Pumba" id="P11279"/>
<dbReference type="TopDownProteomics" id="P11279-1">
    <molecule id="P11279-1"/>
</dbReference>
<dbReference type="ABCD" id="P11279">
    <property type="antibodies" value="10 sequenced antibodies"/>
</dbReference>
<dbReference type="Antibodypedia" id="2703">
    <property type="antibodies" value="1482 antibodies from 51 providers"/>
</dbReference>
<dbReference type="DNASU" id="3916"/>
<dbReference type="Ensembl" id="ENST00000332556.5">
    <molecule id="P11279-1"/>
    <property type="protein sequence ID" value="ENSP00000333298.4"/>
    <property type="gene ID" value="ENSG00000185896.11"/>
</dbReference>
<dbReference type="GeneID" id="3916"/>
<dbReference type="KEGG" id="hsa:3916"/>
<dbReference type="MANE-Select" id="ENST00000332556.5">
    <property type="protein sequence ID" value="ENSP00000333298.4"/>
    <property type="RefSeq nucleotide sequence ID" value="NM_005561.4"/>
    <property type="RefSeq protein sequence ID" value="NP_005552.3"/>
</dbReference>
<dbReference type="UCSC" id="uc001vtm.2">
    <molecule id="P11279-1"/>
    <property type="organism name" value="human"/>
</dbReference>
<dbReference type="AGR" id="HGNC:6499"/>
<dbReference type="CTD" id="3916"/>
<dbReference type="DisGeNET" id="3916"/>
<dbReference type="GeneCards" id="LAMP1"/>
<dbReference type="HGNC" id="HGNC:6499">
    <property type="gene designation" value="LAMP1"/>
</dbReference>
<dbReference type="HPA" id="ENSG00000185896">
    <property type="expression patterns" value="Low tissue specificity"/>
</dbReference>
<dbReference type="MalaCards" id="LAMP1"/>
<dbReference type="MIM" id="153330">
    <property type="type" value="gene"/>
</dbReference>
<dbReference type="neXtProt" id="NX_P11279"/>
<dbReference type="OpenTargets" id="ENSG00000185896"/>
<dbReference type="PharmGKB" id="PA30283"/>
<dbReference type="VEuPathDB" id="HostDB:ENSG00000185896"/>
<dbReference type="eggNOG" id="KOG4818">
    <property type="taxonomic scope" value="Eukaryota"/>
</dbReference>
<dbReference type="GeneTree" id="ENSGT00950000182899"/>
<dbReference type="HOGENOM" id="CLU_055379_2_0_1"/>
<dbReference type="InParanoid" id="P11279"/>
<dbReference type="OMA" id="SSNQIHM"/>
<dbReference type="OrthoDB" id="10037042at2759"/>
<dbReference type="PAN-GO" id="P11279">
    <property type="GO annotations" value="4 GO annotations based on evolutionary models"/>
</dbReference>
<dbReference type="PhylomeDB" id="P11279"/>
<dbReference type="TreeFam" id="TF316339"/>
<dbReference type="PathwayCommons" id="P11279"/>
<dbReference type="Reactome" id="R-HSA-6798695">
    <property type="pathway name" value="Neutrophil degranulation"/>
</dbReference>
<dbReference type="SignaLink" id="P11279"/>
<dbReference type="SIGNOR" id="P11279"/>
<dbReference type="BioGRID-ORCS" id="3916">
    <property type="hits" value="12 hits in 1157 CRISPR screens"/>
</dbReference>
<dbReference type="ChiTaRS" id="LAMP1">
    <property type="organism name" value="human"/>
</dbReference>
<dbReference type="GeneWiki" id="LAMP1"/>
<dbReference type="GenomeRNAi" id="3916"/>
<dbReference type="Pharos" id="P11279">
    <property type="development level" value="Tbio"/>
</dbReference>
<dbReference type="PRO" id="PR:P11279"/>
<dbReference type="Proteomes" id="UP000005640">
    <property type="component" value="Chromosome 13"/>
</dbReference>
<dbReference type="RNAct" id="P11279">
    <property type="molecule type" value="protein"/>
</dbReference>
<dbReference type="Bgee" id="ENSG00000185896">
    <property type="expression patterns" value="Expressed in endothelial cell and 213 other cell types or tissues"/>
</dbReference>
<dbReference type="ExpressionAtlas" id="P11279">
    <property type="expression patterns" value="baseline and differential"/>
</dbReference>
<dbReference type="GO" id="GO:0044754">
    <property type="term" value="C:autolysosome"/>
    <property type="evidence" value="ECO:0007669"/>
    <property type="project" value="Ensembl"/>
</dbReference>
<dbReference type="GO" id="GO:0000421">
    <property type="term" value="C:autophagosome membrane"/>
    <property type="evidence" value="ECO:0007669"/>
    <property type="project" value="Ensembl"/>
</dbReference>
<dbReference type="GO" id="GO:0035577">
    <property type="term" value="C:azurophil granule membrane"/>
    <property type="evidence" value="ECO:0000304"/>
    <property type="project" value="Reactome"/>
</dbReference>
<dbReference type="GO" id="GO:0101004">
    <property type="term" value="C:cytolytic granule membrane"/>
    <property type="evidence" value="ECO:0000314"/>
    <property type="project" value="UniProtKB"/>
</dbReference>
<dbReference type="GO" id="GO:0005737">
    <property type="term" value="C:cytoplasm"/>
    <property type="evidence" value="ECO:0000314"/>
    <property type="project" value="MGI"/>
</dbReference>
<dbReference type="GO" id="GO:0005829">
    <property type="term" value="C:cytosol"/>
    <property type="evidence" value="ECO:0007669"/>
    <property type="project" value="GOC"/>
</dbReference>
<dbReference type="GO" id="GO:0010008">
    <property type="term" value="C:endosome membrane"/>
    <property type="evidence" value="ECO:0000250"/>
    <property type="project" value="UniProtKB"/>
</dbReference>
<dbReference type="GO" id="GO:0009897">
    <property type="term" value="C:external side of plasma membrane"/>
    <property type="evidence" value="ECO:0007669"/>
    <property type="project" value="Ensembl"/>
</dbReference>
<dbReference type="GO" id="GO:0070062">
    <property type="term" value="C:extracellular exosome"/>
    <property type="evidence" value="ECO:0007005"/>
    <property type="project" value="UniProtKB"/>
</dbReference>
<dbReference type="GO" id="GO:0101003">
    <property type="term" value="C:ficolin-1-rich granule membrane"/>
    <property type="evidence" value="ECO:0000304"/>
    <property type="project" value="Reactome"/>
</dbReference>
<dbReference type="GO" id="GO:0005770">
    <property type="term" value="C:late endosome"/>
    <property type="evidence" value="ECO:0000314"/>
    <property type="project" value="UniProtKB"/>
</dbReference>
<dbReference type="GO" id="GO:0031902">
    <property type="term" value="C:late endosome membrane"/>
    <property type="evidence" value="ECO:0000318"/>
    <property type="project" value="GO_Central"/>
</dbReference>
<dbReference type="GO" id="GO:0005765">
    <property type="term" value="C:lysosomal membrane"/>
    <property type="evidence" value="ECO:0000314"/>
    <property type="project" value="UniProt"/>
</dbReference>
<dbReference type="GO" id="GO:0005764">
    <property type="term" value="C:lysosome"/>
    <property type="evidence" value="ECO:0000314"/>
    <property type="project" value="UniProtKB"/>
</dbReference>
<dbReference type="GO" id="GO:0042470">
    <property type="term" value="C:melanosome"/>
    <property type="evidence" value="ECO:0007669"/>
    <property type="project" value="Ensembl"/>
</dbReference>
<dbReference type="GO" id="GO:0016020">
    <property type="term" value="C:membrane"/>
    <property type="evidence" value="ECO:0007005"/>
    <property type="project" value="UniProtKB"/>
</dbReference>
<dbReference type="GO" id="GO:0005771">
    <property type="term" value="C:multivesicular body"/>
    <property type="evidence" value="ECO:0007669"/>
    <property type="project" value="Ensembl"/>
</dbReference>
<dbReference type="GO" id="GO:0048471">
    <property type="term" value="C:perinuclear region of cytoplasm"/>
    <property type="evidence" value="ECO:0000315"/>
    <property type="project" value="AgBase"/>
</dbReference>
<dbReference type="GO" id="GO:0061474">
    <property type="term" value="C:phagolysosome membrane"/>
    <property type="evidence" value="ECO:0007669"/>
    <property type="project" value="Ensembl"/>
</dbReference>
<dbReference type="GO" id="GO:0005886">
    <property type="term" value="C:plasma membrane"/>
    <property type="evidence" value="ECO:0000314"/>
    <property type="project" value="UniProtKB"/>
</dbReference>
<dbReference type="GO" id="GO:0042383">
    <property type="term" value="C:sarcolemma"/>
    <property type="evidence" value="ECO:0007669"/>
    <property type="project" value="Ensembl"/>
</dbReference>
<dbReference type="GO" id="GO:0008021">
    <property type="term" value="C:synaptic vesicle"/>
    <property type="evidence" value="ECO:0007669"/>
    <property type="project" value="Ensembl"/>
</dbReference>
<dbReference type="GO" id="GO:0019899">
    <property type="term" value="F:enzyme binding"/>
    <property type="evidence" value="ECO:0000353"/>
    <property type="project" value="UniProtKB"/>
</dbReference>
<dbReference type="GO" id="GO:0008200">
    <property type="term" value="F:ion channel inhibitor activity"/>
    <property type="evidence" value="ECO:0000314"/>
    <property type="project" value="UniProtKB"/>
</dbReference>
<dbReference type="GO" id="GO:0019904">
    <property type="term" value="F:protein domain specific binding"/>
    <property type="evidence" value="ECO:0007669"/>
    <property type="project" value="Ensembl"/>
</dbReference>
<dbReference type="GO" id="GO:0001618">
    <property type="term" value="F:virus receptor activity"/>
    <property type="evidence" value="ECO:0007669"/>
    <property type="project" value="UniProtKB-KW"/>
</dbReference>
<dbReference type="GO" id="GO:0072594">
    <property type="term" value="P:establishment of protein localization to organelle"/>
    <property type="evidence" value="ECO:0000315"/>
    <property type="project" value="UniProtKB"/>
</dbReference>
<dbReference type="GO" id="GO:0090160">
    <property type="term" value="P:Golgi to lysosome transport"/>
    <property type="evidence" value="ECO:0000315"/>
    <property type="project" value="UniProtKB"/>
</dbReference>
<dbReference type="GO" id="GO:0140507">
    <property type="term" value="P:granzyme-mediated programmed cell death signaling pathway"/>
    <property type="evidence" value="ECO:0000315"/>
    <property type="project" value="GO_Central"/>
</dbReference>
<dbReference type="GO" id="GO:0007042">
    <property type="term" value="P:lysosomal lumen acidification"/>
    <property type="evidence" value="ECO:0000314"/>
    <property type="project" value="UniProtKB"/>
</dbReference>
<dbReference type="GO" id="GO:0043323">
    <property type="term" value="P:positive regulation of natural killer cell degranulation"/>
    <property type="evidence" value="ECO:0000315"/>
    <property type="project" value="UniProtKB"/>
</dbReference>
<dbReference type="GO" id="GO:0045954">
    <property type="term" value="P:positive regulation of natural killer cell mediated cytotoxicity"/>
    <property type="evidence" value="ECO:0000315"/>
    <property type="project" value="UniProtKB"/>
</dbReference>
<dbReference type="GO" id="GO:0050821">
    <property type="term" value="P:protein stabilization"/>
    <property type="evidence" value="ECO:0000250"/>
    <property type="project" value="CAFA"/>
</dbReference>
<dbReference type="GO" id="GO:1902513">
    <property type="term" value="P:regulation of organelle transport along microtubule"/>
    <property type="evidence" value="ECO:0000315"/>
    <property type="project" value="UniProtKB"/>
</dbReference>
<dbReference type="CDD" id="cd12087">
    <property type="entry name" value="TM_EGFR-like"/>
    <property type="match status" value="1"/>
</dbReference>
<dbReference type="FunFam" id="2.40.160.110:FF:000005">
    <property type="entry name" value="Lysosome-associated membrane glycoprotein 1"/>
    <property type="match status" value="1"/>
</dbReference>
<dbReference type="FunFam" id="2.40.160.110:FF:000001">
    <property type="entry name" value="lysosome-associated membrane glycoprotein 2 isoform X2"/>
    <property type="match status" value="1"/>
</dbReference>
<dbReference type="Gene3D" id="2.40.160.110">
    <property type="match status" value="2"/>
</dbReference>
<dbReference type="InterPro" id="IPR048528">
    <property type="entry name" value="Lamp2-like_luminal"/>
</dbReference>
<dbReference type="InterPro" id="IPR048524">
    <property type="entry name" value="Lamp2-like_TM"/>
</dbReference>
<dbReference type="InterPro" id="IPR018134">
    <property type="entry name" value="LAMP_CS"/>
</dbReference>
<dbReference type="InterPro" id="IPR002000">
    <property type="entry name" value="Lysosome-assoc_membr_glycop"/>
</dbReference>
<dbReference type="PANTHER" id="PTHR11506">
    <property type="entry name" value="LYSOSOME-ASSOCIATED MEMBRANE GLYCOPROTEIN"/>
    <property type="match status" value="1"/>
</dbReference>
<dbReference type="PANTHER" id="PTHR11506:SF27">
    <property type="entry name" value="LYSOSOME-ASSOCIATED MEMBRANE GLYCOPROTEIN 1"/>
    <property type="match status" value="1"/>
</dbReference>
<dbReference type="Pfam" id="PF01299">
    <property type="entry name" value="Lamp2-like_luminal"/>
    <property type="match status" value="2"/>
</dbReference>
<dbReference type="Pfam" id="PF21222">
    <property type="entry name" value="Lamp2_2nd"/>
    <property type="match status" value="1"/>
</dbReference>
<dbReference type="PRINTS" id="PR00336">
    <property type="entry name" value="LYSASSOCTDMP"/>
</dbReference>
<dbReference type="PROSITE" id="PS00310">
    <property type="entry name" value="LAMP_1"/>
    <property type="match status" value="2"/>
</dbReference>
<dbReference type="PROSITE" id="PS00311">
    <property type="entry name" value="LAMP_2"/>
    <property type="match status" value="1"/>
</dbReference>
<dbReference type="PROSITE" id="PS51407">
    <property type="entry name" value="LAMP_3"/>
    <property type="match status" value="1"/>
</dbReference>
<evidence type="ECO:0000250" key="1">
    <source>
        <dbReference type="UniProtKB" id="P05300"/>
    </source>
</evidence>
<evidence type="ECO:0000255" key="2"/>
<evidence type="ECO:0000255" key="3">
    <source>
        <dbReference type="PROSITE-ProRule" id="PRU00740"/>
    </source>
</evidence>
<evidence type="ECO:0000256" key="4">
    <source>
        <dbReference type="SAM" id="MobiDB-lite"/>
    </source>
</evidence>
<evidence type="ECO:0000269" key="5">
    <source>
    </source>
</evidence>
<evidence type="ECO:0000269" key="6">
    <source>
    </source>
</evidence>
<evidence type="ECO:0000269" key="7">
    <source>
    </source>
</evidence>
<evidence type="ECO:0000269" key="8">
    <source>
    </source>
</evidence>
<evidence type="ECO:0000269" key="9">
    <source>
    </source>
</evidence>
<evidence type="ECO:0000269" key="10">
    <source>
    </source>
</evidence>
<evidence type="ECO:0000269" key="11">
    <source>
    </source>
</evidence>
<evidence type="ECO:0000269" key="12">
    <source>
    </source>
</evidence>
<evidence type="ECO:0000269" key="13">
    <source>
    </source>
</evidence>
<evidence type="ECO:0000269" key="14">
    <source>
    </source>
</evidence>
<evidence type="ECO:0000269" key="15">
    <source>
    </source>
</evidence>
<evidence type="ECO:0000269" key="16">
    <source>
    </source>
</evidence>
<evidence type="ECO:0000269" key="17">
    <source>
    </source>
</evidence>
<evidence type="ECO:0000269" key="18">
    <source>
    </source>
</evidence>
<evidence type="ECO:0000269" key="19">
    <source>
    </source>
</evidence>
<evidence type="ECO:0000269" key="20">
    <source>
    </source>
</evidence>
<evidence type="ECO:0000269" key="21">
    <source>
    </source>
</evidence>
<evidence type="ECO:0000269" key="22">
    <source>
    </source>
</evidence>
<evidence type="ECO:0000269" key="23">
    <source>
    </source>
</evidence>
<evidence type="ECO:0000269" key="24">
    <source>
    </source>
</evidence>
<evidence type="ECO:0000269" key="25">
    <source>
    </source>
</evidence>
<evidence type="ECO:0000269" key="26">
    <source>
    </source>
</evidence>
<evidence type="ECO:0000269" key="27">
    <source>
    </source>
</evidence>
<evidence type="ECO:0000303" key="28">
    <source>
    </source>
</evidence>
<evidence type="ECO:0000303" key="29">
    <source>
    </source>
</evidence>
<evidence type="ECO:0000303" key="30">
    <source>
    </source>
</evidence>
<evidence type="ECO:0000303" key="31">
    <source>
    </source>
</evidence>
<evidence type="ECO:0000305" key="32"/>
<evidence type="ECO:0000305" key="33">
    <source>
    </source>
</evidence>
<evidence type="ECO:0000312" key="34">
    <source>
        <dbReference type="HGNC" id="HGNC:6499"/>
    </source>
</evidence>
<evidence type="ECO:0007744" key="35">
    <source>
        <dbReference type="PDB" id="8FY5"/>
    </source>
</evidence>
<evidence type="ECO:0007744" key="36">
    <source>
        <dbReference type="PDB" id="8FYF"/>
    </source>
</evidence>
<evidence type="ECO:0007829" key="37">
    <source>
        <dbReference type="PDB" id="8ATH"/>
    </source>
</evidence>
<evidence type="ECO:0007829" key="38">
    <source>
        <dbReference type="PDB" id="8FYF"/>
    </source>
</evidence>
<gene>
    <name evidence="29 34" type="primary">LAMP1</name>
</gene>
<reference key="1">
    <citation type="journal article" date="1988" name="J. Biol. Chem.">
        <title>Cloning of cDNAs encoding human lysosomal membrane glycoproteins, h-lamp-1 and h-lamp-2. Comparison of their deduced amino acid sequences.</title>
        <authorList>
            <person name="Fukuda M."/>
            <person name="Viitala J."/>
            <person name="Matteson J."/>
            <person name="Carlsson S.R."/>
        </authorList>
    </citation>
    <scope>NUCLEOTIDE SEQUENCE [MRNA] (ISOFORM 1)</scope>
    <scope>PROTEIN SEQUENCE OF 29-51; 117-131 AND 164-198</scope>
</reference>
<reference key="2">
    <citation type="journal article" date="2004" name="Nat. Genet.">
        <title>Complete sequencing and characterization of 21,243 full-length human cDNAs.</title>
        <authorList>
            <person name="Ota T."/>
            <person name="Suzuki Y."/>
            <person name="Nishikawa T."/>
            <person name="Otsuki T."/>
            <person name="Sugiyama T."/>
            <person name="Irie R."/>
            <person name="Wakamatsu A."/>
            <person name="Hayashi K."/>
            <person name="Sato H."/>
            <person name="Nagai K."/>
            <person name="Kimura K."/>
            <person name="Makita H."/>
            <person name="Sekine M."/>
            <person name="Obayashi M."/>
            <person name="Nishi T."/>
            <person name="Shibahara T."/>
            <person name="Tanaka T."/>
            <person name="Ishii S."/>
            <person name="Yamamoto J."/>
            <person name="Saito K."/>
            <person name="Kawai Y."/>
            <person name="Isono Y."/>
            <person name="Nakamura Y."/>
            <person name="Nagahari K."/>
            <person name="Murakami K."/>
            <person name="Yasuda T."/>
            <person name="Iwayanagi T."/>
            <person name="Wagatsuma M."/>
            <person name="Shiratori A."/>
            <person name="Sudo H."/>
            <person name="Hosoiri T."/>
            <person name="Kaku Y."/>
            <person name="Kodaira H."/>
            <person name="Kondo H."/>
            <person name="Sugawara M."/>
            <person name="Takahashi M."/>
            <person name="Kanda K."/>
            <person name="Yokoi T."/>
            <person name="Furuya T."/>
            <person name="Kikkawa E."/>
            <person name="Omura Y."/>
            <person name="Abe K."/>
            <person name="Kamihara K."/>
            <person name="Katsuta N."/>
            <person name="Sato K."/>
            <person name="Tanikawa M."/>
            <person name="Yamazaki M."/>
            <person name="Ninomiya K."/>
            <person name="Ishibashi T."/>
            <person name="Yamashita H."/>
            <person name="Murakawa K."/>
            <person name="Fujimori K."/>
            <person name="Tanai H."/>
            <person name="Kimata M."/>
            <person name="Watanabe M."/>
            <person name="Hiraoka S."/>
            <person name="Chiba Y."/>
            <person name="Ishida S."/>
            <person name="Ono Y."/>
            <person name="Takiguchi S."/>
            <person name="Watanabe S."/>
            <person name="Yosida M."/>
            <person name="Hotuta T."/>
            <person name="Kusano J."/>
            <person name="Kanehori K."/>
            <person name="Takahashi-Fujii A."/>
            <person name="Hara H."/>
            <person name="Tanase T.-O."/>
            <person name="Nomura Y."/>
            <person name="Togiya S."/>
            <person name="Komai F."/>
            <person name="Hara R."/>
            <person name="Takeuchi K."/>
            <person name="Arita M."/>
            <person name="Imose N."/>
            <person name="Musashino K."/>
            <person name="Yuuki H."/>
            <person name="Oshima A."/>
            <person name="Sasaki N."/>
            <person name="Aotsuka S."/>
            <person name="Yoshikawa Y."/>
            <person name="Matsunawa H."/>
            <person name="Ichihara T."/>
            <person name="Shiohata N."/>
            <person name="Sano S."/>
            <person name="Moriya S."/>
            <person name="Momiyama H."/>
            <person name="Satoh N."/>
            <person name="Takami S."/>
            <person name="Terashima Y."/>
            <person name="Suzuki O."/>
            <person name="Nakagawa S."/>
            <person name="Senoh A."/>
            <person name="Mizoguchi H."/>
            <person name="Goto Y."/>
            <person name="Shimizu F."/>
            <person name="Wakebe H."/>
            <person name="Hishigaki H."/>
            <person name="Watanabe T."/>
            <person name="Sugiyama A."/>
            <person name="Takemoto M."/>
            <person name="Kawakami B."/>
            <person name="Yamazaki M."/>
            <person name="Watanabe K."/>
            <person name="Kumagai A."/>
            <person name="Itakura S."/>
            <person name="Fukuzumi Y."/>
            <person name="Fujimori Y."/>
            <person name="Komiyama M."/>
            <person name="Tashiro H."/>
            <person name="Tanigami A."/>
            <person name="Fujiwara T."/>
            <person name="Ono T."/>
            <person name="Yamada K."/>
            <person name="Fujii Y."/>
            <person name="Ozaki K."/>
            <person name="Hirao M."/>
            <person name="Ohmori Y."/>
            <person name="Kawabata A."/>
            <person name="Hikiji T."/>
            <person name="Kobatake N."/>
            <person name="Inagaki H."/>
            <person name="Ikema Y."/>
            <person name="Okamoto S."/>
            <person name="Okitani R."/>
            <person name="Kawakami T."/>
            <person name="Noguchi S."/>
            <person name="Itoh T."/>
            <person name="Shigeta K."/>
            <person name="Senba T."/>
            <person name="Matsumura K."/>
            <person name="Nakajima Y."/>
            <person name="Mizuno T."/>
            <person name="Morinaga M."/>
            <person name="Sasaki M."/>
            <person name="Togashi T."/>
            <person name="Oyama M."/>
            <person name="Hata H."/>
            <person name="Watanabe M."/>
            <person name="Komatsu T."/>
            <person name="Mizushima-Sugano J."/>
            <person name="Satoh T."/>
            <person name="Shirai Y."/>
            <person name="Takahashi Y."/>
            <person name="Nakagawa K."/>
            <person name="Okumura K."/>
            <person name="Nagase T."/>
            <person name="Nomura N."/>
            <person name="Kikuchi H."/>
            <person name="Masuho Y."/>
            <person name="Yamashita R."/>
            <person name="Nakai K."/>
            <person name="Yada T."/>
            <person name="Nakamura Y."/>
            <person name="Ohara O."/>
            <person name="Isogai T."/>
            <person name="Sugano S."/>
        </authorList>
    </citation>
    <scope>NUCLEOTIDE SEQUENCE [LARGE SCALE MRNA] (ISOFORM 2)</scope>
    <source>
        <tissue>Mammary gland</tissue>
    </source>
</reference>
<reference key="3">
    <citation type="journal article" date="2004" name="Nature">
        <title>The DNA sequence and analysis of human chromosome 13.</title>
        <authorList>
            <person name="Dunham A."/>
            <person name="Matthews L.H."/>
            <person name="Burton J."/>
            <person name="Ashurst J.L."/>
            <person name="Howe K.L."/>
            <person name="Ashcroft K.J."/>
            <person name="Beare D.M."/>
            <person name="Burford D.C."/>
            <person name="Hunt S.E."/>
            <person name="Griffiths-Jones S."/>
            <person name="Jones M.C."/>
            <person name="Keenan S.J."/>
            <person name="Oliver K."/>
            <person name="Scott C.E."/>
            <person name="Ainscough R."/>
            <person name="Almeida J.P."/>
            <person name="Ambrose K.D."/>
            <person name="Andrews D.T."/>
            <person name="Ashwell R.I.S."/>
            <person name="Babbage A.K."/>
            <person name="Bagguley C.L."/>
            <person name="Bailey J."/>
            <person name="Bannerjee R."/>
            <person name="Barlow K.F."/>
            <person name="Bates K."/>
            <person name="Beasley H."/>
            <person name="Bird C.P."/>
            <person name="Bray-Allen S."/>
            <person name="Brown A.J."/>
            <person name="Brown J.Y."/>
            <person name="Burrill W."/>
            <person name="Carder C."/>
            <person name="Carter N.P."/>
            <person name="Chapman J.C."/>
            <person name="Clamp M.E."/>
            <person name="Clark S.Y."/>
            <person name="Clarke G."/>
            <person name="Clee C.M."/>
            <person name="Clegg S.C."/>
            <person name="Cobley V."/>
            <person name="Collins J.E."/>
            <person name="Corby N."/>
            <person name="Coville G.J."/>
            <person name="Deloukas P."/>
            <person name="Dhami P."/>
            <person name="Dunham I."/>
            <person name="Dunn M."/>
            <person name="Earthrowl M.E."/>
            <person name="Ellington A.G."/>
            <person name="Faulkner L."/>
            <person name="Frankish A.G."/>
            <person name="Frankland J."/>
            <person name="French L."/>
            <person name="Garner P."/>
            <person name="Garnett J."/>
            <person name="Gilbert J.G.R."/>
            <person name="Gilson C.J."/>
            <person name="Ghori J."/>
            <person name="Grafham D.V."/>
            <person name="Gribble S.M."/>
            <person name="Griffiths C."/>
            <person name="Hall R.E."/>
            <person name="Hammond S."/>
            <person name="Harley J.L."/>
            <person name="Hart E.A."/>
            <person name="Heath P.D."/>
            <person name="Howden P.J."/>
            <person name="Huckle E.J."/>
            <person name="Hunt P.J."/>
            <person name="Hunt A.R."/>
            <person name="Johnson C."/>
            <person name="Johnson D."/>
            <person name="Kay M."/>
            <person name="Kimberley A.M."/>
            <person name="King A."/>
            <person name="Laird G.K."/>
            <person name="Langford C.J."/>
            <person name="Lawlor S."/>
            <person name="Leongamornlert D.A."/>
            <person name="Lloyd D.M."/>
            <person name="Lloyd C."/>
            <person name="Loveland J.E."/>
            <person name="Lovell J."/>
            <person name="Martin S."/>
            <person name="Mashreghi-Mohammadi M."/>
            <person name="McLaren S.J."/>
            <person name="McMurray A."/>
            <person name="Milne S."/>
            <person name="Moore M.J.F."/>
            <person name="Nickerson T."/>
            <person name="Palmer S.A."/>
            <person name="Pearce A.V."/>
            <person name="Peck A.I."/>
            <person name="Pelan S."/>
            <person name="Phillimore B."/>
            <person name="Porter K.M."/>
            <person name="Rice C.M."/>
            <person name="Searle S."/>
            <person name="Sehra H.K."/>
            <person name="Shownkeen R."/>
            <person name="Skuce C.D."/>
            <person name="Smith M."/>
            <person name="Steward C.A."/>
            <person name="Sycamore N."/>
            <person name="Tester J."/>
            <person name="Thomas D.W."/>
            <person name="Tracey A."/>
            <person name="Tromans A."/>
            <person name="Tubby B."/>
            <person name="Wall M."/>
            <person name="Wallis J.M."/>
            <person name="West A.P."/>
            <person name="Whitehead S.L."/>
            <person name="Willey D.L."/>
            <person name="Wilming L."/>
            <person name="Wray P.W."/>
            <person name="Wright M.W."/>
            <person name="Young L."/>
            <person name="Coulson A."/>
            <person name="Durbin R.M."/>
            <person name="Hubbard T."/>
            <person name="Sulston J.E."/>
            <person name="Beck S."/>
            <person name="Bentley D.R."/>
            <person name="Rogers J."/>
            <person name="Ross M.T."/>
        </authorList>
    </citation>
    <scope>NUCLEOTIDE SEQUENCE [LARGE SCALE GENOMIC DNA]</scope>
</reference>
<reference key="4">
    <citation type="submission" date="2005-07" db="EMBL/GenBank/DDBJ databases">
        <authorList>
            <person name="Mural R.J."/>
            <person name="Istrail S."/>
            <person name="Sutton G.G."/>
            <person name="Florea L."/>
            <person name="Halpern A.L."/>
            <person name="Mobarry C.M."/>
            <person name="Lippert R."/>
            <person name="Walenz B."/>
            <person name="Shatkay H."/>
            <person name="Dew I."/>
            <person name="Miller J.R."/>
            <person name="Flanigan M.J."/>
            <person name="Edwards N.J."/>
            <person name="Bolanos R."/>
            <person name="Fasulo D."/>
            <person name="Halldorsson B.V."/>
            <person name="Hannenhalli S."/>
            <person name="Turner R."/>
            <person name="Yooseph S."/>
            <person name="Lu F."/>
            <person name="Nusskern D.R."/>
            <person name="Shue B.C."/>
            <person name="Zheng X.H."/>
            <person name="Zhong F."/>
            <person name="Delcher A.L."/>
            <person name="Huson D.H."/>
            <person name="Kravitz S.A."/>
            <person name="Mouchard L."/>
            <person name="Reinert K."/>
            <person name="Remington K.A."/>
            <person name="Clark A.G."/>
            <person name="Waterman M.S."/>
            <person name="Eichler E.E."/>
            <person name="Adams M.D."/>
            <person name="Hunkapiller M.W."/>
            <person name="Myers E.W."/>
            <person name="Venter J.C."/>
        </authorList>
    </citation>
    <scope>NUCLEOTIDE SEQUENCE [LARGE SCALE GENOMIC DNA]</scope>
</reference>
<reference key="5">
    <citation type="journal article" date="2004" name="Genome Res.">
        <title>The status, quality, and expansion of the NIH full-length cDNA project: the Mammalian Gene Collection (MGC).</title>
        <authorList>
            <consortium name="The MGC Project Team"/>
        </authorList>
    </citation>
    <scope>NUCLEOTIDE SEQUENCE [LARGE SCALE MRNA] (ISOFORM 1)</scope>
    <source>
        <tissue>Brain</tissue>
        <tissue>Pancreas</tissue>
        <tissue>Testis</tissue>
    </source>
</reference>
<reference key="6">
    <citation type="journal article" date="1989" name="Arch. Biochem. Biophys.">
        <title>Purification and characterization of human lysosomal membrane glycoproteins.</title>
        <authorList>
            <person name="Mane S.M."/>
            <person name="Marzella L."/>
            <person name="Bainton D.F."/>
            <person name="Holt V.K."/>
            <person name="Cha Y."/>
            <person name="Hildreth J.E.K."/>
            <person name="August J.T."/>
        </authorList>
    </citation>
    <scope>PROTEIN SEQUENCE OF 29-59</scope>
</reference>
<reference key="7">
    <citation type="journal article" date="1988" name="Proc. Natl. Acad. Sci. U.S.A.">
        <title>Molecular cloning of cDNAs encoding lamp A, a human lysosomal membrane glycoprotein with apparent Mr approximately equal to 120,000.</title>
        <authorList>
            <person name="Viitala J."/>
            <person name="Carlsson S.R."/>
            <person name="Siebert P.D."/>
            <person name="Fukuda M."/>
        </authorList>
    </citation>
    <scope>NUCLEOTIDE SEQUENCE [MRNA] OF 33-417 (ISOFORM 1)</scope>
    <scope>PARTIAL PROTEIN SEQUENCE</scope>
</reference>
<reference key="8">
    <citation type="journal article" date="1993" name="J. Biol. Chem.">
        <title>The genes of major lysosomal membrane glycoproteins, lamp-1 and lamp-2. 5'-flanking sequence of lamp-2 gene and comparison of exon organization in two genes.</title>
        <authorList>
            <person name="Sawada R."/>
            <person name="Jardine K.A."/>
            <person name="Fukuda M."/>
        </authorList>
    </citation>
    <scope>NUCLEOTIDE SEQUENCE [GENOMIC DNA] OF 62-417</scope>
    <source>
        <tissue>Placenta</tissue>
    </source>
</reference>
<reference key="9">
    <citation type="journal article" date="1989" name="J. Biol. Chem.">
        <title>Structure of human lysosomal membrane glycoprotein 1. Assignment of disulfide bonds and visualization of its domain arrangement.</title>
        <authorList>
            <person name="Carlsson S.R."/>
            <person name="Fukuda M."/>
        </authorList>
    </citation>
    <scope>DISULFIDE BONDS</scope>
</reference>
<reference key="10">
    <citation type="journal article" date="1990" name="J. Biol. Chem.">
        <title>The polylactosaminoglycans of human lysosomal membrane glycoproteins lamp-1 and lamp-2. Localization on the peptide backbones.</title>
        <authorList>
            <person name="Carlsson S.R."/>
            <person name="Fukuda M."/>
        </authorList>
    </citation>
    <scope>POLYLACTOSAMINOGLYCANS</scope>
</reference>
<reference key="11">
    <citation type="journal article" date="1991" name="J. Exp. Med.">
        <title>Cytotoxic T lymphocyte granules are secretory lysosomes, containing both perforin and granzymes.</title>
        <authorList>
            <person name="Peters P.J."/>
            <person name="Borst J."/>
            <person name="Oorschot V."/>
            <person name="Fukuda M."/>
            <person name="Kraehenbuehl O."/>
            <person name="Tschopp J."/>
            <person name="Slot J.W."/>
            <person name="Geuze H.J."/>
        </authorList>
    </citation>
    <scope>SUBCELLULAR LOCATION</scope>
    <scope>FUNCTION</scope>
</reference>
<reference key="12">
    <citation type="journal article" date="1993" name="Arch. Biochem. Biophys.">
        <title>Assignment of O-glycan attachment sites to the hinge-like regions of human lysosomal membrane glycoproteins lamp-1 and lamp-2.</title>
        <authorList>
            <person name="Carlsson S.R."/>
            <person name="Lycksell P.-O."/>
            <person name="Fukuda M."/>
        </authorList>
    </citation>
    <scope>GLYCOSYLATION AT ASN-37; ASN-45; ASN-107; ASN-165; ASN-181; SER-197; THR-199; THR-200; SER-207; SER-209; SER-211; ASN-223; ASN-228; ASN-241; ASN-261 AND ASN-322</scope>
    <scope>PROTEIN SEQUENCE OF 191-215</scope>
</reference>
<reference key="13">
    <citation type="journal article" date="1993" name="J. Biol. Chem.">
        <title>E-selectin-dependent adhesion efficiency of colonic carcinoma cells is increased by genetic manipulation of their cell surface lysosomal membrane glycoprotein-1 expression levels.</title>
        <authorList>
            <person name="Sawada R."/>
            <person name="Lowe J.B."/>
            <person name="Fukuda M."/>
        </authorList>
    </citation>
    <scope>FUNCTION</scope>
</reference>
<reference key="14">
    <citation type="journal article" date="2003" name="Nat. Biotechnol.">
        <title>Identification and quantification of N-linked glycoproteins using hydrazide chemistry, stable isotope labeling and mass spectrometry.</title>
        <authorList>
            <person name="Zhang H."/>
            <person name="Li X.-J."/>
            <person name="Martin D.B."/>
            <person name="Aebersold R."/>
        </authorList>
    </citation>
    <scope>GLYCOSYLATION AT ASN-62 AND ASN-103</scope>
</reference>
<reference key="15">
    <citation type="journal article" date="2005" name="J. Proteome Res.">
        <title>Human plasma N-glycoproteome analysis by immunoaffinity subtraction, hydrazide chemistry, and mass spectrometry.</title>
        <authorList>
            <person name="Liu T."/>
            <person name="Qian W.-J."/>
            <person name="Gritsenko M.A."/>
            <person name="Camp D.G. II"/>
            <person name="Monroe M.E."/>
            <person name="Moore R.J."/>
            <person name="Smith R.D."/>
        </authorList>
    </citation>
    <scope>GLYCOSYLATION [LARGE SCALE ANALYSIS] AT ASN-103 AND ASN-249</scope>
    <source>
        <tissue>Plasma</tissue>
    </source>
</reference>
<reference key="16">
    <citation type="journal article" date="2005" name="Mol. Biol. Cell">
        <title>The oxysterol-binding protein homologue ORP1L interacts with Rab7 and alters functional properties of late endocytic compartments.</title>
        <authorList>
            <person name="Johansson M."/>
            <person name="Lehto M."/>
            <person name="Tanhuanpaeae K."/>
            <person name="Cover T.L."/>
            <person name="Olkkonen V.M."/>
        </authorList>
    </citation>
    <scope>SUBCELLULAR LOCATION</scope>
</reference>
<reference key="17">
    <citation type="journal article" date="2007" name="Traffic">
        <title>Integral and associated lysosomal membrane proteins.</title>
        <authorList>
            <person name="Schroeder B."/>
            <person name="Wrocklage C."/>
            <person name="Pan C."/>
            <person name="Jaeger R."/>
            <person name="Koesters B."/>
            <person name="Schaefer H."/>
            <person name="Elsaesser H.-P."/>
            <person name="Mann M."/>
            <person name="Hasilik A."/>
        </authorList>
    </citation>
    <scope>SUBCELLULAR LOCATION [LARGE SCALE ANALYSIS]</scope>
    <source>
        <tissue>Placenta</tissue>
    </source>
</reference>
<reference key="18">
    <citation type="journal article" date="2009" name="J. Proteome Res.">
        <title>Glycoproteomics analysis of human liver tissue by combination of multiple enzyme digestion and hydrazide chemistry.</title>
        <authorList>
            <person name="Chen R."/>
            <person name="Jiang X."/>
            <person name="Sun D."/>
            <person name="Han G."/>
            <person name="Wang F."/>
            <person name="Ye M."/>
            <person name="Wang L."/>
            <person name="Zou H."/>
        </authorList>
    </citation>
    <scope>GLYCOSYLATION [LARGE SCALE ANALYSIS] AT ASN-62; ASN-76; ASN-84; ASN-103; ASN-121; ASN-130; ASN-249 AND ASN-293</scope>
    <source>
        <tissue>Liver</tissue>
    </source>
</reference>
<reference key="19">
    <citation type="journal article" date="2011" name="BMC Syst. Biol.">
        <title>Initial characterization of the human central proteome.</title>
        <authorList>
            <person name="Burkard T.R."/>
            <person name="Planyavsky M."/>
            <person name="Kaupe I."/>
            <person name="Breitwieser F.P."/>
            <person name="Buerckstuemmer T."/>
            <person name="Bennett K.L."/>
            <person name="Superti-Furga G."/>
            <person name="Colinge J."/>
        </authorList>
    </citation>
    <scope>IDENTIFICATION BY MASS SPECTROMETRY [LARGE SCALE ANALYSIS]</scope>
</reference>
<reference key="20">
    <citation type="journal article" date="2012" name="J. Cell Sci.">
        <title>The lysosomal polypeptide transporter TAPL is stabilized by interaction with LAMP-1 and LAMP-2.</title>
        <authorList>
            <person name="Demirel O."/>
            <person name="Jan I."/>
            <person name="Wolters D."/>
            <person name="Blanz J."/>
            <person name="Saftig P."/>
            <person name="Tampe R."/>
            <person name="Abele R."/>
        </authorList>
    </citation>
    <scope>INTERACTION WITH ABCB9</scope>
</reference>
<reference key="21">
    <citation type="journal article" date="2013" name="Mol. Biol. Cell">
        <title>Arf-like GTPase Arl8b regulates lytic granule polarization and natural killer cell-mediated cytotoxicity.</title>
        <authorList>
            <person name="Tuli A."/>
            <person name="Thiery J."/>
            <person name="James A.M."/>
            <person name="Michelet X."/>
            <person name="Sharma M."/>
            <person name="Garg S."/>
            <person name="Sanborn K.B."/>
            <person name="Orange J.S."/>
            <person name="Lieberman J."/>
            <person name="Brenner M.B."/>
        </authorList>
    </citation>
    <scope>SUBCELLULAR LOCATION</scope>
</reference>
<reference key="22">
    <citation type="journal article" date="2013" name="Blood">
        <title>Surface CD107a/LAMP-1 protects natural killer cells from degranulation-associated damage.</title>
        <authorList>
            <person name="Cohnen A."/>
            <person name="Chiang S.C."/>
            <person name="Stojanovic A."/>
            <person name="Schmidt H."/>
            <person name="Claus M."/>
            <person name="Saftig P."/>
            <person name="Janssen O."/>
            <person name="Cerwenka A."/>
            <person name="Bryceson Y.T."/>
            <person name="Watzl C."/>
        </authorList>
    </citation>
    <scope>FUNCTION</scope>
    <scope>SUBCELLULAR LOCATION</scope>
</reference>
<reference key="23">
    <citation type="journal article" date="2013" name="Blood">
        <title>LAMP1/CD107a is required for efficient perforin delivery to lytic granules and NK-cell cytotoxicity.</title>
        <authorList>
            <person name="Krzewski K."/>
            <person name="Gil-Krzewska A."/>
            <person name="Nguyen V."/>
            <person name="Peruzzi G."/>
            <person name="Coligan J.E."/>
        </authorList>
    </citation>
    <scope>FUNCTION</scope>
</reference>
<reference key="24">
    <citation type="journal article" date="2014" name="J. Proteomics">
        <title>An enzyme assisted RP-RPLC approach for in-depth analysis of human liver phosphoproteome.</title>
        <authorList>
            <person name="Bian Y."/>
            <person name="Song C."/>
            <person name="Cheng K."/>
            <person name="Dong M."/>
            <person name="Wang F."/>
            <person name="Huang J."/>
            <person name="Sun D."/>
            <person name="Wang L."/>
            <person name="Ye M."/>
            <person name="Zou H."/>
        </authorList>
    </citation>
    <scope>IDENTIFICATION BY MASS SPECTROMETRY [LARGE SCALE ANALYSIS]</scope>
    <source>
        <tissue>Liver</tissue>
    </source>
</reference>
<reference key="25">
    <citation type="journal article" date="2014" name="Science">
        <title>Virus entry. Lassa virus entry requires a trigger-induced receptor switch.</title>
        <authorList>
            <person name="Jae L.T."/>
            <person name="Raaben M."/>
            <person name="Herbert A.S."/>
            <person name="Kuehne A.I."/>
            <person name="Wirchnianski A.S."/>
            <person name="Soh T.K."/>
            <person name="Stubbs S.H."/>
            <person name="Janssen H."/>
            <person name="Damme M."/>
            <person name="Saftig P."/>
            <person name="Whelan S.P."/>
            <person name="Dye J.M."/>
            <person name="Brummelkamp T.R."/>
        </authorList>
    </citation>
    <scope>FUNCTION (MICROBIAL INFECTION)</scope>
    <scope>INTERACTION WITH LASSA VIRUS PROTEIN GLYCOPROTEIN (MICROBIAL INFECTION)</scope>
    <scope>MUTAGENESIS OF ASN-76</scope>
</reference>
<reference key="26">
    <citation type="journal article" date="2015" name="J. Virol.">
        <title>Molecular Mechanism for LAMP1 Recognition by Lassa Virus.</title>
        <authorList>
            <person name="Cohen-Dvashi H."/>
            <person name="Cohen N."/>
            <person name="Israeli H."/>
            <person name="Diskin R."/>
        </authorList>
    </citation>
    <scope>FUNCTION (MICROBIAL INFECTION)</scope>
    <scope>INTERACTION WITH LASSA VIRUS PROTEIN GLYCOPROTEIN (MICROBIAL INFECTION)</scope>
</reference>
<reference key="27">
    <citation type="journal article" date="2015" name="Proteomics">
        <title>N-terminome analysis of the human mitochondrial proteome.</title>
        <authorList>
            <person name="Vaca Jacome A.S."/>
            <person name="Rabilloud T."/>
            <person name="Schaeffer-Reiss C."/>
            <person name="Rompais M."/>
            <person name="Ayoub D."/>
            <person name="Lane L."/>
            <person name="Bairoch A."/>
            <person name="Van Dorsselaer A."/>
            <person name="Carapito C."/>
        </authorList>
    </citation>
    <scope>IDENTIFICATION BY MASS SPECTROMETRY [LARGE SCALE ANALYSIS]</scope>
</reference>
<reference key="28">
    <citation type="journal article" date="2016" name="J. Virol.">
        <title>Role of LAMP1 Binding and pH Sensing by the Spike Complex of Lassa Virus.</title>
        <authorList>
            <person name="Cohen-Dvashi H."/>
            <person name="Israeli H."/>
            <person name="Shani O."/>
            <person name="Katz A."/>
            <person name="Diskin R."/>
        </authorList>
    </citation>
    <scope>FUNCTION (MICROBIAL INFECTION)</scope>
    <scope>INTERACTION WITH LASSA VIRUS PROTEIN GLYCOPROTEIN (MICROBIAL INFECTION)</scope>
</reference>
<reference key="29">
    <citation type="journal article" date="2017" name="PLoS Pathog.">
        <title>Mapping of the Lassa virus LAMP1 binding site reveals unique determinants not shared by other old world arenaviruses.</title>
        <authorList>
            <person name="Israeli H."/>
            <person name="Cohen-Dvashi H."/>
            <person name="Shulman A."/>
            <person name="Shimon A."/>
            <person name="Diskin R."/>
        </authorList>
    </citation>
    <scope>FUNCTION (MICROBIAL INFECTION)</scope>
    <scope>INTERACTION WITH LASSA VIRUS PROTEIN GLYCOPROTEIN (MICROBIAL INFECTION)</scope>
</reference>
<reference key="30">
    <citation type="journal article" date="2018" name="MBio">
        <title>Lamp1 Increases the Efficiency of Lassa Virus Infection by Promoting Fusion in Less Acidic Endosomal Compartments.</title>
        <authorList>
            <person name="Hulseberg C.E."/>
            <person name="Feneant L."/>
            <person name="Szymanska K.M."/>
            <person name="White J.M."/>
        </authorList>
    </citation>
    <scope>FUNCTION (MICROBIAL INFECTION)</scope>
</reference>
<reference key="31">
    <citation type="journal article" date="2020" name="J. Virol.">
        <title>Lysosome-Associated Membrane Proteins Support the Furin-Mediated Processing of the Mumps Virus Fusion Protein.</title>
        <authorList>
            <person name="Ueo A."/>
            <person name="Kubota M."/>
            <person name="Shirogane Y."/>
            <person name="Ohno S."/>
            <person name="Hashiguchi T."/>
            <person name="Yanagi Y."/>
        </authorList>
    </citation>
    <scope>FUNCTION (MICROBIAL INFECTION)</scope>
    <scope>INTERACTION WITH FURIN</scope>
    <scope>INTERACTION WITH MUMPS VIRURS PROTEIN F (MICROBIAL INFECTION)</scope>
</reference>
<reference evidence="35" key="32">
    <citation type="journal article" date="2023" name="Mol. Cell">
        <title>Lysosomal LAMP proteins regulate lysosomal pH by direct inhibition of the TMEM175 channel.</title>
        <authorList>
            <person name="Zhang J."/>
            <person name="Zeng W."/>
            <person name="Han Y."/>
            <person name="Lee W.R."/>
            <person name="Liou J."/>
            <person name="Jiang Y."/>
        </authorList>
    </citation>
    <scope>STRUCTURE BY ELECTRON MICROSCOPY (3.4 ANGSTROMS) IN COMPLEX WITH TMEM175</scope>
    <scope>FUNCTION</scope>
    <scope>INTERACTION WITH TMEM175</scope>
</reference>
<comment type="function">
    <text evidence="10 13 14 25 26">Lysosomal membrane glycoprotein which plays an important role in lysosome biogenesis, lysosomal pH regulation, autophagy and cholesterol homeostasis (PubMed:37390818). Acts as an important regulator of lysosomal lumen pH regulation by acting as a direct inhibitor of the proton channel TMEM175, facilitating lysosomal acidification for optimal hydrolase activity (PubMed:37390818). Also plays an important role in NK-cells cytotoxicity (PubMed:2022921, PubMed:23632890). Mechanistically, participates in cytotoxic granule movement to the cell surface and perforin trafficking to the lytic granule (PubMed:23632890). In addition, protects NK-cells from degranulation-associated damage induced by their own cytotoxic granule content (PubMed:23847195). Presents carbohydrate ligands to selectins (PubMed:7685349).</text>
</comment>
<comment type="function">
    <text evidence="16 18 19 20 22">(Microbial infection) Acts as a receptor for Lassa virus glycoprotein (PubMed:24970085, PubMed:25972533, PubMed:27605678, PubMed:28448640). Also promotes fusion of the virus with host membrane in less acidic endosomes (PubMed:29295909).</text>
</comment>
<comment type="function">
    <text evidence="24">(Microbial infection) Supports the FURIN-mediated cleavage of mumps virus fusion protein F by interacting with both FURIN and the unprocessed form but not the processed form of the viral protein F.</text>
</comment>
<comment type="subunit">
    <text evidence="12 24 25">Interacts with ABCB9; this interaction strongly stabilizes ABCB9 and protects ABCB9 against lysosomal degradation (PubMed:22641697). Interacts with FURIN (PubMed:32295904). Interacts with TMEM175; inhibiting the proton channel activity of TMEM175 (PubMed:37390818).</text>
</comment>
<comment type="subunit">
    <text evidence="16 18 19 20">(Microbial infection) Interacts with Lassa virus protein glycoprotein.</text>
</comment>
<comment type="subunit">
    <text evidence="24">(Microbial infection) Interacts with mumps virus protein F; this interaction promotes protein F cleavage by FURIN.</text>
</comment>
<comment type="interaction">
    <interactant intactId="EBI-2805407">
        <id>P11279</id>
    </interactant>
    <interactant intactId="EBI-993049">
        <id>Q5VZM2</id>
        <label>RRAGB</label>
    </interactant>
    <organismsDiffer>false</organismsDiffer>
    <experiments>2</experiments>
</comment>
<comment type="interaction">
    <interactant intactId="EBI-2805407">
        <id>P11279</id>
    </interactant>
    <interactant intactId="EBI-1222191">
        <id>Q6P1K1</id>
        <label>SLC48A1</label>
    </interactant>
    <organismsDiffer>false</organismsDiffer>
    <experiments>3</experiments>
</comment>
<comment type="interaction">
    <interactant intactId="EBI-2805407">
        <id>P11279</id>
    </interactant>
    <interactant intactId="EBI-12190699">
        <id>Q6UX27-3</id>
        <label>VSTM1</label>
    </interactant>
    <organismsDiffer>false</organismsDiffer>
    <experiments>3</experiments>
</comment>
<comment type="interaction">
    <interactant intactId="EBI-2805407">
        <id>P11279</id>
    </interactant>
    <interactant intactId="EBI-8411266">
        <id>P08669</id>
        <label>GPC</label>
    </interactant>
    <organismsDiffer>true</organismsDiffer>
    <experiments>4</experiments>
</comment>
<comment type="subcellular location">
    <subcellularLocation>
        <location evidence="6 8">Lysosome membrane</location>
        <topology evidence="2">Single-pass type I membrane protein</topology>
    </subcellularLocation>
    <subcellularLocation>
        <location evidence="6">Endosome membrane</location>
        <topology evidence="2">Single-pass type I membrane protein</topology>
    </subcellularLocation>
    <subcellularLocation>
        <location evidence="6">Late endosome membrane</location>
        <topology evidence="2">Single-pass type I membrane protein</topology>
    </subcellularLocation>
    <subcellularLocation>
        <location evidence="10 14">Cell membrane</location>
        <topology evidence="2">Single-pass type I membrane protein</topology>
    </subcellularLocation>
    <subcellularLocation>
        <location evidence="10 15">Cytolytic granule membrane</location>
        <topology evidence="2">Single-pass type I membrane protein</topology>
    </subcellularLocation>
    <text evidence="1 6 8">This protein shuttles between lysosomes, endosomes, and the plasma membrane (By similarity). Colocalizes with OSBPL1A at the late endosome (PubMed:16176980).</text>
</comment>
<comment type="alternative products">
    <event type="alternative splicing"/>
    <isoform>
        <id>P11279-1</id>
        <name>1</name>
        <sequence type="displayed"/>
    </isoform>
    <isoform>
        <id>P11279-2</id>
        <name>2</name>
        <sequence type="described" ref="VSP_056032"/>
    </isoform>
</comment>
<comment type="PTM">
    <text evidence="5 7 9 27">O- and N-glycosylated; some of the 18 N-linked glycans are polylactosaminoglycans.</text>
</comment>
<comment type="PTM">
    <text evidence="16">(Microbial infection) The glycosylation of Asn-76 is essential for Lassa virus entry into cells.</text>
</comment>
<comment type="similarity">
    <text evidence="3">Belongs to the LAMP family.</text>
</comment>
<feature type="signal peptide" evidence="21 23">
    <location>
        <begin position="1"/>
        <end position="28"/>
    </location>
</feature>
<feature type="chain" id="PRO_0000017104" description="Lysosome-associated membrane glycoprotein 1">
    <location>
        <begin position="29"/>
        <end position="417"/>
    </location>
</feature>
<feature type="topological domain" description="Lumenal" evidence="2">
    <location>
        <begin position="29"/>
        <end position="382"/>
    </location>
</feature>
<feature type="transmembrane region" description="Helical" evidence="3 33 35 36">
    <location>
        <begin position="383"/>
        <end position="410"/>
    </location>
</feature>
<feature type="topological domain" description="Cytoplasmic" evidence="3">
    <location>
        <begin position="411"/>
        <end position="417"/>
    </location>
</feature>
<feature type="region of interest" description="First lumenal domain">
    <location>
        <begin position="29"/>
        <end position="194"/>
    </location>
</feature>
<feature type="region of interest" description="Disordered" evidence="4">
    <location>
        <begin position="184"/>
        <end position="221"/>
    </location>
</feature>
<feature type="region of interest" description="Hinge">
    <location>
        <begin position="195"/>
        <end position="227"/>
    </location>
</feature>
<feature type="region of interest" description="Second lumenal domain">
    <location>
        <begin position="228"/>
        <end position="382"/>
    </location>
</feature>
<feature type="compositionally biased region" description="Pro residues" evidence="4">
    <location>
        <begin position="199"/>
        <end position="215"/>
    </location>
</feature>
<feature type="glycosylation site" description="N-linked (GlcNAc...) asparagine" evidence="27">
    <location>
        <position position="37"/>
    </location>
</feature>
<feature type="glycosylation site" description="N-linked (GlcNAc...) asparagine" evidence="27">
    <location>
        <position position="45"/>
    </location>
</feature>
<feature type="glycosylation site" description="N-linked (GlcNAc...) (polylactosaminoglycan) asparagine" evidence="5 9">
    <location>
        <position position="62"/>
    </location>
</feature>
<feature type="glycosylation site" description="N-linked (GlcNAc...) asparagine" evidence="9 11">
    <location>
        <position position="76"/>
    </location>
</feature>
<feature type="glycosylation site" description="N-linked (GlcNAc...) asparagine" evidence="9">
    <location>
        <position position="84"/>
    </location>
</feature>
<feature type="glycosylation site" description="N-linked (GlcNAc...) asparagine" evidence="5 7 9">
    <location>
        <position position="103"/>
    </location>
</feature>
<feature type="glycosylation site" description="N-linked (GlcNAc...) asparagine" evidence="27">
    <location>
        <position position="107"/>
    </location>
</feature>
<feature type="glycosylation site" description="N-linked (GlcNAc...) (polylactosaminoglycan) asparagine" evidence="9">
    <location>
        <position position="121"/>
    </location>
</feature>
<feature type="glycosylation site" description="N-linked (GlcNAc...) (polylactosaminoglycan) asparagine" evidence="9">
    <location>
        <position position="130"/>
    </location>
</feature>
<feature type="glycosylation site" description="N-linked (GlcNAc...) asparagine" evidence="11 27">
    <location>
        <position position="165"/>
    </location>
</feature>
<feature type="glycosylation site" description="N-linked (GlcNAc...) asparagine" evidence="11 27">
    <location>
        <position position="181"/>
    </location>
</feature>
<feature type="glycosylation site" description="O-linked (GalNAc...) serine; partial" evidence="27">
    <location>
        <position position="197"/>
    </location>
</feature>
<feature type="glycosylation site" description="O-linked (GalNAc...) threonine" evidence="27">
    <location>
        <position position="199"/>
    </location>
</feature>
<feature type="glycosylation site" description="O-linked (GalNAc...) threonine" evidence="27">
    <location>
        <position position="200"/>
    </location>
</feature>
<feature type="glycosylation site" description="O-linked (GalNAc...) serine" evidence="27">
    <location>
        <position position="207"/>
    </location>
</feature>
<feature type="glycosylation site" description="O-linked (GalNAc...) serine" evidence="27">
    <location>
        <position position="209"/>
    </location>
</feature>
<feature type="glycosylation site" description="O-linked (GalNAc...) serine" evidence="27">
    <location>
        <position position="211"/>
    </location>
</feature>
<feature type="glycosylation site" description="N-linked (GlcNAc...) (polylactosaminoglycan) asparagine" evidence="27">
    <location>
        <position position="223"/>
    </location>
</feature>
<feature type="glycosylation site" description="N-linked (GlcNAc...) (polylactosaminoglycan) asparagine" evidence="27">
    <location>
        <position position="228"/>
    </location>
</feature>
<feature type="glycosylation site" description="N-linked (GlcNAc...) asparagine" evidence="27">
    <location>
        <position position="241"/>
    </location>
</feature>
<feature type="glycosylation site" description="N-linked (GlcNAc...) asparagine" evidence="7 9">
    <location>
        <position position="249"/>
    </location>
</feature>
<feature type="glycosylation site" description="N-linked (GlcNAc...) asparagine" evidence="11 27">
    <location>
        <position position="261"/>
    </location>
</feature>
<feature type="glycosylation site" description="N-linked (GlcNAc...) asparagine" evidence="9">
    <location>
        <position position="293"/>
    </location>
</feature>
<feature type="glycosylation site" description="N-linked (GlcNAc...) asparagine" evidence="27">
    <location>
        <position position="322"/>
    </location>
</feature>
<feature type="disulfide bond" evidence="3 17">
    <location>
        <begin position="41"/>
        <end position="80"/>
    </location>
</feature>
<feature type="disulfide bond" evidence="3 17">
    <location>
        <begin position="155"/>
        <end position="191"/>
    </location>
</feature>
<feature type="disulfide bond" evidence="3 17">
    <location>
        <begin position="231"/>
        <end position="269"/>
    </location>
</feature>
<feature type="disulfide bond" evidence="3 17">
    <location>
        <begin position="338"/>
        <end position="375"/>
    </location>
</feature>
<feature type="splice variant" id="VSP_056032" description="In isoform 2." evidence="28">
    <location>
        <begin position="135"/>
        <end position="187"/>
    </location>
</feature>
<feature type="sequence variant" id="VAR_046450" description="In dbSNP:rs9577230.">
    <original>I</original>
    <variation>T</variation>
    <location>
        <position position="309"/>
    </location>
</feature>
<feature type="mutagenesis site" description="Complete loss of interaction with Lassa virus protein GPC." evidence="16">
    <original>N</original>
    <variation>S</variation>
    <location>
        <position position="76"/>
    </location>
</feature>
<feature type="sequence conflict" description="In Ref. 1; AAA60382." evidence="32" ref="1">
    <original>A</original>
    <variation>M</variation>
    <location>
        <position position="2"/>
    </location>
</feature>
<feature type="sequence conflict" description="In Ref. 1; AAA60382." evidence="32" ref="1">
    <original>G</original>
    <variation>R</variation>
    <location>
        <position position="5"/>
    </location>
</feature>
<feature type="sequence conflict" description="In Ref. 1; AAA60382." evidence="32" ref="1">
    <original>LLLLLGLMHCA</original>
    <variation>PVAAARPHALS</variation>
    <location>
        <begin position="16"/>
        <end position="26"/>
    </location>
</feature>
<feature type="sequence conflict" description="In Ref. 7; AAA59524." evidence="32" ref="7">
    <original>VKNGNGTA</original>
    <variation>MARGGRVR</variation>
    <location>
        <begin position="33"/>
        <end position="40"/>
    </location>
</feature>
<feature type="sequence conflict" description="In Ref. 8; AAF66141." evidence="32" ref="8">
    <original>K</original>
    <variation>T</variation>
    <location>
        <position position="262"/>
    </location>
</feature>
<feature type="sequence conflict" description="In Ref. 8; AAF66141." evidence="32" ref="8">
    <location>
        <position position="377"/>
    </location>
</feature>
<feature type="sequence conflict" description="In Ref. 1; AAA60382, 7; AAA59524 and 8; AAF66141." evidence="32" ref="1 7 8">
    <original>M</original>
    <variation>T</variation>
    <location>
        <position position="382"/>
    </location>
</feature>
<feature type="strand" evidence="37">
    <location>
        <begin position="30"/>
        <end position="34"/>
    </location>
</feature>
<feature type="strand" evidence="37">
    <location>
        <begin position="40"/>
        <end position="56"/>
    </location>
</feature>
<feature type="strand" evidence="37">
    <location>
        <begin position="59"/>
        <end position="66"/>
    </location>
</feature>
<feature type="turn" evidence="37">
    <location>
        <begin position="75"/>
        <end position="77"/>
    </location>
</feature>
<feature type="turn" evidence="37">
    <location>
        <begin position="83"/>
        <end position="85"/>
    </location>
</feature>
<feature type="strand" evidence="37">
    <location>
        <begin position="89"/>
        <end position="94"/>
    </location>
</feature>
<feature type="turn" evidence="37">
    <location>
        <begin position="95"/>
        <end position="97"/>
    </location>
</feature>
<feature type="strand" evidence="37">
    <location>
        <begin position="98"/>
        <end position="106"/>
    </location>
</feature>
<feature type="strand" evidence="37">
    <location>
        <begin position="108"/>
        <end position="121"/>
    </location>
</feature>
<feature type="turn" evidence="37">
    <location>
        <begin position="125"/>
        <end position="127"/>
    </location>
</feature>
<feature type="strand" evidence="37">
    <location>
        <begin position="136"/>
        <end position="141"/>
    </location>
</feature>
<feature type="strand" evidence="37">
    <location>
        <begin position="146"/>
        <end position="148"/>
    </location>
</feature>
<feature type="strand" evidence="37">
    <location>
        <begin position="151"/>
        <end position="157"/>
    </location>
</feature>
<feature type="strand" evidence="37">
    <location>
        <begin position="159"/>
        <end position="163"/>
    </location>
</feature>
<feature type="strand" evidence="37">
    <location>
        <begin position="166"/>
        <end position="178"/>
    </location>
</feature>
<feature type="strand" evidence="37">
    <location>
        <begin position="180"/>
        <end position="183"/>
    </location>
</feature>
<feature type="strand" evidence="37">
    <location>
        <begin position="188"/>
        <end position="190"/>
    </location>
</feature>
<feature type="helix" evidence="37">
    <location>
        <begin position="192"/>
        <end position="194"/>
    </location>
</feature>
<feature type="helix" evidence="38">
    <location>
        <begin position="384"/>
        <end position="409"/>
    </location>
</feature>
<name>LAMP1_HUMAN</name>
<proteinExistence type="evidence at protein level"/>
<accession>P11279</accession>
<accession>B4DWL3</accession>
<accession>Q8WU33</accession>
<accession>Q96I40</accession>
<accession>Q9BRD2</accession>
<accession>Q9NP13</accession>
<keyword id="KW-0002">3D-structure</keyword>
<keyword id="KW-0025">Alternative splicing</keyword>
<keyword id="KW-1003">Cell membrane</keyword>
<keyword id="KW-0903">Direct protein sequencing</keyword>
<keyword id="KW-1015">Disulfide bond</keyword>
<keyword id="KW-0967">Endosome</keyword>
<keyword id="KW-0325">Glycoprotein</keyword>
<keyword id="KW-1183">Host cell receptor for virus entry</keyword>
<keyword id="KW-0945">Host-virus interaction</keyword>
<keyword id="KW-0458">Lysosome</keyword>
<keyword id="KW-0472">Membrane</keyword>
<keyword id="KW-1267">Proteomics identification</keyword>
<keyword id="KW-0675">Receptor</keyword>
<keyword id="KW-1185">Reference proteome</keyword>
<keyword id="KW-0732">Signal</keyword>
<keyword id="KW-0812">Transmembrane</keyword>
<keyword id="KW-1133">Transmembrane helix</keyword>